<keyword id="KW-0012">Acyltransferase</keyword>
<keyword id="KW-0441">Lipid A biosynthesis</keyword>
<keyword id="KW-0444">Lipid biosynthesis</keyword>
<keyword id="KW-0443">Lipid metabolism</keyword>
<keyword id="KW-0677">Repeat</keyword>
<keyword id="KW-0808">Transferase</keyword>
<dbReference type="EC" id="2.3.1.191" evidence="1"/>
<dbReference type="EMBL" id="CP000241">
    <property type="protein sequence ID" value="ABF84257.1"/>
    <property type="molecule type" value="Genomic_DNA"/>
</dbReference>
<dbReference type="RefSeq" id="WP_000777148.1">
    <property type="nucleotide sequence ID" value="NC_008086.1"/>
</dbReference>
<dbReference type="SMR" id="Q1CUW5"/>
<dbReference type="KEGG" id="hpa:HPAG1_0190"/>
<dbReference type="HOGENOM" id="CLU_049865_0_0_7"/>
<dbReference type="UniPathway" id="UPA00973"/>
<dbReference type="GO" id="GO:0016020">
    <property type="term" value="C:membrane"/>
    <property type="evidence" value="ECO:0007669"/>
    <property type="project" value="GOC"/>
</dbReference>
<dbReference type="GO" id="GO:0016410">
    <property type="term" value="F:N-acyltransferase activity"/>
    <property type="evidence" value="ECO:0007669"/>
    <property type="project" value="InterPro"/>
</dbReference>
<dbReference type="GO" id="GO:0009245">
    <property type="term" value="P:lipid A biosynthetic process"/>
    <property type="evidence" value="ECO:0007669"/>
    <property type="project" value="UniProtKB-UniRule"/>
</dbReference>
<dbReference type="CDD" id="cd03352">
    <property type="entry name" value="LbH_LpxD"/>
    <property type="match status" value="1"/>
</dbReference>
<dbReference type="Gene3D" id="2.160.10.10">
    <property type="entry name" value="Hexapeptide repeat proteins"/>
    <property type="match status" value="1"/>
</dbReference>
<dbReference type="Gene3D" id="3.40.1390.10">
    <property type="entry name" value="MurE/MurF, N-terminal domain"/>
    <property type="match status" value="1"/>
</dbReference>
<dbReference type="HAMAP" id="MF_00523">
    <property type="entry name" value="LpxD"/>
    <property type="match status" value="1"/>
</dbReference>
<dbReference type="InterPro" id="IPR001451">
    <property type="entry name" value="Hexapep"/>
</dbReference>
<dbReference type="InterPro" id="IPR007691">
    <property type="entry name" value="LpxD"/>
</dbReference>
<dbReference type="InterPro" id="IPR011004">
    <property type="entry name" value="Trimer_LpxA-like_sf"/>
</dbReference>
<dbReference type="InterPro" id="IPR020573">
    <property type="entry name" value="UDP_GlcNAc_AcTrfase_non-rep"/>
</dbReference>
<dbReference type="NCBIfam" id="TIGR01853">
    <property type="entry name" value="lipid_A_lpxD"/>
    <property type="match status" value="1"/>
</dbReference>
<dbReference type="NCBIfam" id="NF002060">
    <property type="entry name" value="PRK00892.1"/>
    <property type="match status" value="1"/>
</dbReference>
<dbReference type="PANTHER" id="PTHR43378">
    <property type="entry name" value="UDP-3-O-ACYLGLUCOSAMINE N-ACYLTRANSFERASE"/>
    <property type="match status" value="1"/>
</dbReference>
<dbReference type="PANTHER" id="PTHR43378:SF2">
    <property type="entry name" value="UDP-3-O-ACYLGLUCOSAMINE N-ACYLTRANSFERASE 1, MITOCHONDRIAL-RELATED"/>
    <property type="match status" value="1"/>
</dbReference>
<dbReference type="Pfam" id="PF00132">
    <property type="entry name" value="Hexapep"/>
    <property type="match status" value="3"/>
</dbReference>
<dbReference type="Pfam" id="PF04613">
    <property type="entry name" value="LpxD"/>
    <property type="match status" value="1"/>
</dbReference>
<dbReference type="SUPFAM" id="SSF51161">
    <property type="entry name" value="Trimeric LpxA-like enzymes"/>
    <property type="match status" value="1"/>
</dbReference>
<name>LPXD_HELPH</name>
<comment type="function">
    <text evidence="1">Catalyzes the N-acylation of UDP-3-O-acylglucosamine using 3-hydroxyacyl-ACP as the acyl donor. Is involved in the biosynthesis of lipid A, a phosphorylated glycolipid that anchors the lipopolysaccharide to the outer membrane of the cell.</text>
</comment>
<comment type="catalytic activity">
    <reaction evidence="1">
        <text>a UDP-3-O-[(3R)-3-hydroxyacyl]-alpha-D-glucosamine + a (3R)-hydroxyacyl-[ACP] = a UDP-2-N,3-O-bis[(3R)-3-hydroxyacyl]-alpha-D-glucosamine + holo-[ACP] + H(+)</text>
        <dbReference type="Rhea" id="RHEA:53836"/>
        <dbReference type="Rhea" id="RHEA-COMP:9685"/>
        <dbReference type="Rhea" id="RHEA-COMP:9945"/>
        <dbReference type="ChEBI" id="CHEBI:15378"/>
        <dbReference type="ChEBI" id="CHEBI:64479"/>
        <dbReference type="ChEBI" id="CHEBI:78827"/>
        <dbReference type="ChEBI" id="CHEBI:137740"/>
        <dbReference type="ChEBI" id="CHEBI:137748"/>
        <dbReference type="EC" id="2.3.1.191"/>
    </reaction>
</comment>
<comment type="pathway">
    <text evidence="1">Bacterial outer membrane biogenesis; LPS lipid A biosynthesis.</text>
</comment>
<comment type="subunit">
    <text evidence="1">Homotrimer.</text>
</comment>
<comment type="similarity">
    <text evidence="1">Belongs to the transferase hexapeptide repeat family. LpxD subfamily.</text>
</comment>
<proteinExistence type="inferred from homology"/>
<organism>
    <name type="scientific">Helicobacter pylori (strain HPAG1)</name>
    <dbReference type="NCBI Taxonomy" id="357544"/>
    <lineage>
        <taxon>Bacteria</taxon>
        <taxon>Pseudomonadati</taxon>
        <taxon>Campylobacterota</taxon>
        <taxon>Epsilonproteobacteria</taxon>
        <taxon>Campylobacterales</taxon>
        <taxon>Helicobacteraceae</taxon>
        <taxon>Helicobacter</taxon>
    </lineage>
</organism>
<accession>Q1CUW5</accession>
<protein>
    <recommendedName>
        <fullName evidence="1">UDP-3-O-acylglucosamine N-acyltransferase</fullName>
        <ecNumber evidence="1">2.3.1.191</ecNumber>
    </recommendedName>
</protein>
<evidence type="ECO:0000255" key="1">
    <source>
        <dbReference type="HAMAP-Rule" id="MF_00523"/>
    </source>
</evidence>
<gene>
    <name evidence="1" type="primary">lpxD</name>
    <name type="ordered locus">HPAG1_0190</name>
</gene>
<sequence length="336" mass="36638">MKLSELLSTYSIETEFSNDFEVHALAELDKATPNDISYIDQARYLKLLKDSKAGAVFIRKKESSKVPKRMQALIVDNPHLAFAKASHAFKIPFFKNPESVSEPKHFKKVTIMPNVMIGEGVEIGENSLIYPGVVIADGVKIGKNCVLYPRVILYQNTILEDNVTIHAGSVIGGDGFGYAHTALGEHVKIEHVGIVRIQKNVEIGANTAIDRAVFGETLIKEGVKIDNLVQIGHNCVLGEHSIVVSQVGLSGSTTTGRNVVFGGQVGIGGHLHVGEFTQIGGKSAVGKDLPPNTNFAGAIPAMEIHEWHHFLAHLRTNFRKQQKTSLLQKAKGFFKS</sequence>
<reference key="1">
    <citation type="journal article" date="2006" name="Proc. Natl. Acad. Sci. U.S.A.">
        <title>The complete genome sequence of a chronic atrophic gastritis Helicobacter pylori strain: evolution during disease progression.</title>
        <authorList>
            <person name="Oh J.D."/>
            <person name="Kling-Baeckhed H."/>
            <person name="Giannakis M."/>
            <person name="Xu J."/>
            <person name="Fulton R.S."/>
            <person name="Fulton L.A."/>
            <person name="Cordum H.S."/>
            <person name="Wang C."/>
            <person name="Elliott G."/>
            <person name="Edwards J."/>
            <person name="Mardis E.R."/>
            <person name="Engstrand L.G."/>
            <person name="Gordon J.I."/>
        </authorList>
    </citation>
    <scope>NUCLEOTIDE SEQUENCE [LARGE SCALE GENOMIC DNA]</scope>
    <source>
        <strain>HPAG1</strain>
    </source>
</reference>
<feature type="chain" id="PRO_0000264383" description="UDP-3-O-acylglucosamine N-acyltransferase">
    <location>
        <begin position="1"/>
        <end position="336"/>
    </location>
</feature>
<feature type="active site" description="Proton acceptor" evidence="1">
    <location>
        <position position="233"/>
    </location>
</feature>